<organism>
    <name type="scientific">Streptococcus pneumoniae serotype 19F (strain G54)</name>
    <dbReference type="NCBI Taxonomy" id="512566"/>
    <lineage>
        <taxon>Bacteria</taxon>
        <taxon>Bacillati</taxon>
        <taxon>Bacillota</taxon>
        <taxon>Bacilli</taxon>
        <taxon>Lactobacillales</taxon>
        <taxon>Streptococcaceae</taxon>
        <taxon>Streptococcus</taxon>
    </lineage>
</organism>
<keyword id="KW-0963">Cytoplasm</keyword>
<gene>
    <name type="ordered locus">SPG_0679</name>
</gene>
<accession>B5E349</accession>
<protein>
    <recommendedName>
        <fullName evidence="1">UPF0298 protein SPG_0679</fullName>
    </recommendedName>
</protein>
<dbReference type="EMBL" id="CP001015">
    <property type="protein sequence ID" value="ACF55168.1"/>
    <property type="molecule type" value="Genomic_DNA"/>
</dbReference>
<dbReference type="SMR" id="B5E349"/>
<dbReference type="KEGG" id="spx:SPG_0679"/>
<dbReference type="HOGENOM" id="CLU_159890_1_0_9"/>
<dbReference type="GO" id="GO:0005737">
    <property type="term" value="C:cytoplasm"/>
    <property type="evidence" value="ECO:0007669"/>
    <property type="project" value="UniProtKB-SubCell"/>
</dbReference>
<dbReference type="HAMAP" id="MF_01126">
    <property type="entry name" value="UPF0298"/>
    <property type="match status" value="1"/>
</dbReference>
<dbReference type="InterPro" id="IPR016979">
    <property type="entry name" value="DUF2129"/>
</dbReference>
<dbReference type="NCBIfam" id="NF002631">
    <property type="entry name" value="PRK02302.1"/>
    <property type="match status" value="1"/>
</dbReference>
<dbReference type="Pfam" id="PF09902">
    <property type="entry name" value="DUF2129"/>
    <property type="match status" value="1"/>
</dbReference>
<dbReference type="PIRSF" id="PIRSF031653">
    <property type="entry name" value="UCP031653"/>
    <property type="match status" value="1"/>
</dbReference>
<name>Y679_STRP4</name>
<comment type="subcellular location">
    <subcellularLocation>
        <location evidence="1">Cytoplasm</location>
    </subcellularLocation>
</comment>
<comment type="similarity">
    <text evidence="1">Belongs to the UPF0298 family.</text>
</comment>
<evidence type="ECO:0000255" key="1">
    <source>
        <dbReference type="HAMAP-Rule" id="MF_01126"/>
    </source>
</evidence>
<sequence length="82" mass="9941">MFEKVNRSGLIIYLYYNRDAKKLQDYGDITYHSKKHRYLQLYVPTQEVEQLVGRLSKEKFIKKVRVCHIQELETPFVGNLYR</sequence>
<feature type="chain" id="PRO_1000137289" description="UPF0298 protein SPG_0679">
    <location>
        <begin position="1"/>
        <end position="82"/>
    </location>
</feature>
<reference key="1">
    <citation type="journal article" date="2001" name="Microb. Drug Resist.">
        <title>Annotated draft genomic sequence from a Streptococcus pneumoniae type 19F clinical isolate.</title>
        <authorList>
            <person name="Dopazo J."/>
            <person name="Mendoza A."/>
            <person name="Herrero J."/>
            <person name="Caldara F."/>
            <person name="Humbert Y."/>
            <person name="Friedli L."/>
            <person name="Guerrier M."/>
            <person name="Grand-Schenk E."/>
            <person name="Gandin C."/>
            <person name="de Francesco M."/>
            <person name="Polissi A."/>
            <person name="Buell G."/>
            <person name="Feger G."/>
            <person name="Garcia E."/>
            <person name="Peitsch M."/>
            <person name="Garcia-Bustos J.F."/>
        </authorList>
    </citation>
    <scope>NUCLEOTIDE SEQUENCE [LARGE SCALE GENOMIC DNA]</scope>
    <source>
        <strain>G54</strain>
    </source>
</reference>
<reference key="2">
    <citation type="submission" date="2008-03" db="EMBL/GenBank/DDBJ databases">
        <title>Pneumococcal beta glucoside metabolism investigated by whole genome comparison.</title>
        <authorList>
            <person name="Mulas L."/>
            <person name="Trappetti C."/>
            <person name="Hakenbeck R."/>
            <person name="Iannelli F."/>
            <person name="Pozzi G."/>
            <person name="Davidsen T.M."/>
            <person name="Tettelin H."/>
            <person name="Oggioni M."/>
        </authorList>
    </citation>
    <scope>NUCLEOTIDE SEQUENCE [LARGE SCALE GENOMIC DNA]</scope>
    <source>
        <strain>G54</strain>
    </source>
</reference>
<proteinExistence type="inferred from homology"/>